<keyword id="KW-0067">ATP-binding</keyword>
<keyword id="KW-0319">Glycerol metabolism</keyword>
<keyword id="KW-0418">Kinase</keyword>
<keyword id="KW-0547">Nucleotide-binding</keyword>
<keyword id="KW-0808">Transferase</keyword>
<protein>
    <recommendedName>
        <fullName evidence="1">Glycerol kinase</fullName>
        <ecNumber evidence="1">2.7.1.30</ecNumber>
    </recommendedName>
    <alternativeName>
        <fullName evidence="1">ATP:glycerol 3-phosphotransferase</fullName>
    </alternativeName>
    <alternativeName>
        <fullName evidence="1">Glycerokinase</fullName>
        <shortName evidence="1">GK</shortName>
    </alternativeName>
</protein>
<gene>
    <name evidence="1" type="primary">glpK</name>
    <name type="ordered locus">BSUIS_B0444</name>
</gene>
<evidence type="ECO:0000255" key="1">
    <source>
        <dbReference type="HAMAP-Rule" id="MF_00186"/>
    </source>
</evidence>
<dbReference type="EC" id="2.7.1.30" evidence="1"/>
<dbReference type="EMBL" id="CP000912">
    <property type="protein sequence ID" value="ABY39442.1"/>
    <property type="molecule type" value="Genomic_DNA"/>
</dbReference>
<dbReference type="RefSeq" id="WP_004692351.1">
    <property type="nucleotide sequence ID" value="NC_010167.1"/>
</dbReference>
<dbReference type="SMR" id="A9WYC6"/>
<dbReference type="KEGG" id="bmt:BSUIS_B0444"/>
<dbReference type="HOGENOM" id="CLU_009281_2_3_5"/>
<dbReference type="UniPathway" id="UPA00618">
    <property type="reaction ID" value="UER00672"/>
</dbReference>
<dbReference type="PRO" id="PR:A9WYC6"/>
<dbReference type="Proteomes" id="UP000008545">
    <property type="component" value="Chromosome II"/>
</dbReference>
<dbReference type="GO" id="GO:0005829">
    <property type="term" value="C:cytosol"/>
    <property type="evidence" value="ECO:0007669"/>
    <property type="project" value="TreeGrafter"/>
</dbReference>
<dbReference type="GO" id="GO:0005524">
    <property type="term" value="F:ATP binding"/>
    <property type="evidence" value="ECO:0007669"/>
    <property type="project" value="UniProtKB-UniRule"/>
</dbReference>
<dbReference type="GO" id="GO:0004370">
    <property type="term" value="F:glycerol kinase activity"/>
    <property type="evidence" value="ECO:0000250"/>
    <property type="project" value="UniProtKB"/>
</dbReference>
<dbReference type="GO" id="GO:0019563">
    <property type="term" value="P:glycerol catabolic process"/>
    <property type="evidence" value="ECO:0007669"/>
    <property type="project" value="UniProtKB-UniRule"/>
</dbReference>
<dbReference type="GO" id="GO:0006071">
    <property type="term" value="P:glycerol metabolic process"/>
    <property type="evidence" value="ECO:0000250"/>
    <property type="project" value="UniProtKB"/>
</dbReference>
<dbReference type="GO" id="GO:0006072">
    <property type="term" value="P:glycerol-3-phosphate metabolic process"/>
    <property type="evidence" value="ECO:0007669"/>
    <property type="project" value="InterPro"/>
</dbReference>
<dbReference type="CDD" id="cd07786">
    <property type="entry name" value="FGGY_EcGK_like"/>
    <property type="match status" value="1"/>
</dbReference>
<dbReference type="FunFam" id="3.30.420.40:FF:000007">
    <property type="entry name" value="Glycerol kinase"/>
    <property type="match status" value="1"/>
</dbReference>
<dbReference type="FunFam" id="3.30.420.40:FF:000008">
    <property type="entry name" value="Glycerol kinase"/>
    <property type="match status" value="1"/>
</dbReference>
<dbReference type="Gene3D" id="3.30.420.40">
    <property type="match status" value="2"/>
</dbReference>
<dbReference type="HAMAP" id="MF_00186">
    <property type="entry name" value="Glycerol_kin"/>
    <property type="match status" value="1"/>
</dbReference>
<dbReference type="InterPro" id="IPR043129">
    <property type="entry name" value="ATPase_NBD"/>
</dbReference>
<dbReference type="InterPro" id="IPR000577">
    <property type="entry name" value="Carb_kinase_FGGY"/>
</dbReference>
<dbReference type="InterPro" id="IPR018483">
    <property type="entry name" value="Carb_kinase_FGGY_CS"/>
</dbReference>
<dbReference type="InterPro" id="IPR018485">
    <property type="entry name" value="FGGY_C"/>
</dbReference>
<dbReference type="InterPro" id="IPR018484">
    <property type="entry name" value="FGGY_N"/>
</dbReference>
<dbReference type="InterPro" id="IPR005999">
    <property type="entry name" value="Glycerol_kin"/>
</dbReference>
<dbReference type="NCBIfam" id="TIGR01311">
    <property type="entry name" value="glycerol_kin"/>
    <property type="match status" value="1"/>
</dbReference>
<dbReference type="NCBIfam" id="NF000756">
    <property type="entry name" value="PRK00047.1"/>
    <property type="match status" value="1"/>
</dbReference>
<dbReference type="PANTHER" id="PTHR10196:SF78">
    <property type="entry name" value="GLYCEROL KINASE"/>
    <property type="match status" value="1"/>
</dbReference>
<dbReference type="PANTHER" id="PTHR10196">
    <property type="entry name" value="SUGAR KINASE"/>
    <property type="match status" value="1"/>
</dbReference>
<dbReference type="Pfam" id="PF02782">
    <property type="entry name" value="FGGY_C"/>
    <property type="match status" value="1"/>
</dbReference>
<dbReference type="Pfam" id="PF00370">
    <property type="entry name" value="FGGY_N"/>
    <property type="match status" value="1"/>
</dbReference>
<dbReference type="PIRSF" id="PIRSF000538">
    <property type="entry name" value="GlpK"/>
    <property type="match status" value="1"/>
</dbReference>
<dbReference type="SUPFAM" id="SSF53067">
    <property type="entry name" value="Actin-like ATPase domain"/>
    <property type="match status" value="2"/>
</dbReference>
<dbReference type="PROSITE" id="PS00933">
    <property type="entry name" value="FGGY_KINASES_1"/>
    <property type="match status" value="1"/>
</dbReference>
<dbReference type="PROSITE" id="PS00445">
    <property type="entry name" value="FGGY_KINASES_2"/>
    <property type="match status" value="1"/>
</dbReference>
<comment type="function">
    <text evidence="1">Key enzyme in the regulation of glycerol uptake and metabolism. Catalyzes the phosphorylation of glycerol to yield sn-glycerol 3-phosphate.</text>
</comment>
<comment type="catalytic activity">
    <reaction evidence="1">
        <text>glycerol + ATP = sn-glycerol 3-phosphate + ADP + H(+)</text>
        <dbReference type="Rhea" id="RHEA:21644"/>
        <dbReference type="ChEBI" id="CHEBI:15378"/>
        <dbReference type="ChEBI" id="CHEBI:17754"/>
        <dbReference type="ChEBI" id="CHEBI:30616"/>
        <dbReference type="ChEBI" id="CHEBI:57597"/>
        <dbReference type="ChEBI" id="CHEBI:456216"/>
        <dbReference type="EC" id="2.7.1.30"/>
    </reaction>
</comment>
<comment type="activity regulation">
    <text evidence="1">Inhibited by fructose 1,6-bisphosphate (FBP).</text>
</comment>
<comment type="pathway">
    <text evidence="1">Polyol metabolism; glycerol degradation via glycerol kinase pathway; sn-glycerol 3-phosphate from glycerol: step 1/1.</text>
</comment>
<comment type="similarity">
    <text evidence="1">Belongs to the FGGY kinase family.</text>
</comment>
<accession>A9WYC6</accession>
<sequence length="498" mass="54736">MSGYILAIDQGTTSTRSMLFDRNMRVVGLGQQEFTQHFPSSGWVEHDAEEIWKSVQSTIRIALAQAGISAADVAAIGITNQRKTTVVWDRISGKPVHRAIVWQDRRTAQFCDELKRRNLEPLFTEKTGLLLDPYFSGTKLAWLLNHVPGLRERAQKGQVCFGTIDSWLIYKLTGGKAHVTDATNASRTLIYHIGENRWDDELLDILGIPAAMLPEVKDCAADFGMTDPALFGVSIPILGVAGDQQAAVIGNACFEPGMMKSTYGTGCFALLNTGTDRVTSSNRLLTTIAYRLDGVTTYALEGSIFIAGAAVQWLRDEMGFISVASEVSALAEKADPNQRIYLVPAFTGLGAPYWDAEARGAIFGLTRGTGRAEFARAALESVAYQTFDLLEAMQGDWKGATNHTVLRVDGGMVASDWTMQRLADILNAPVDRPVFLETTVLGAAWLAASRAGIWPDRKGFSERWQRDCRFEPAMPEKERESAIAGWRDSVSRCLTRPQ</sequence>
<organism>
    <name type="scientific">Brucella suis (strain ATCC 23445 / NCTC 10510)</name>
    <dbReference type="NCBI Taxonomy" id="470137"/>
    <lineage>
        <taxon>Bacteria</taxon>
        <taxon>Pseudomonadati</taxon>
        <taxon>Pseudomonadota</taxon>
        <taxon>Alphaproteobacteria</taxon>
        <taxon>Hyphomicrobiales</taxon>
        <taxon>Brucellaceae</taxon>
        <taxon>Brucella/Ochrobactrum group</taxon>
        <taxon>Brucella</taxon>
    </lineage>
</organism>
<name>GLPK_BRUSI</name>
<reference key="1">
    <citation type="submission" date="2007-12" db="EMBL/GenBank/DDBJ databases">
        <title>Brucella suis ATCC 23445 whole genome shotgun sequencing project.</title>
        <authorList>
            <person name="Setubal J.C."/>
            <person name="Bowns C."/>
            <person name="Boyle S."/>
            <person name="Crasta O.R."/>
            <person name="Czar M.J."/>
            <person name="Dharmanolla C."/>
            <person name="Gillespie J.J."/>
            <person name="Kenyon R.W."/>
            <person name="Lu J."/>
            <person name="Mane S."/>
            <person name="Mohapatra S."/>
            <person name="Nagrani S."/>
            <person name="Purkayastha A."/>
            <person name="Rajasimha H.K."/>
            <person name="Shallom J.M."/>
            <person name="Shallom S."/>
            <person name="Shukla M."/>
            <person name="Snyder E.E."/>
            <person name="Sobral B.W."/>
            <person name="Wattam A.R."/>
            <person name="Will R."/>
            <person name="Williams K."/>
            <person name="Yoo H."/>
            <person name="Bruce D."/>
            <person name="Detter C."/>
            <person name="Munk C."/>
            <person name="Brettin T.S."/>
        </authorList>
    </citation>
    <scope>NUCLEOTIDE SEQUENCE [LARGE SCALE GENOMIC DNA]</scope>
    <source>
        <strain>ATCC 23445 / NCTC 10510</strain>
    </source>
</reference>
<proteinExistence type="inferred from homology"/>
<feature type="chain" id="PRO_1000077411" description="Glycerol kinase">
    <location>
        <begin position="1"/>
        <end position="498"/>
    </location>
</feature>
<feature type="binding site" evidence="1">
    <location>
        <position position="12"/>
    </location>
    <ligand>
        <name>ADP</name>
        <dbReference type="ChEBI" id="CHEBI:456216"/>
    </ligand>
</feature>
<feature type="binding site" evidence="1">
    <location>
        <position position="12"/>
    </location>
    <ligand>
        <name>ATP</name>
        <dbReference type="ChEBI" id="CHEBI:30616"/>
    </ligand>
</feature>
<feature type="binding site" evidence="1">
    <location>
        <position position="12"/>
    </location>
    <ligand>
        <name>sn-glycerol 3-phosphate</name>
        <dbReference type="ChEBI" id="CHEBI:57597"/>
    </ligand>
</feature>
<feature type="binding site" evidence="1">
    <location>
        <position position="13"/>
    </location>
    <ligand>
        <name>ATP</name>
        <dbReference type="ChEBI" id="CHEBI:30616"/>
    </ligand>
</feature>
<feature type="binding site" evidence="1">
    <location>
        <position position="14"/>
    </location>
    <ligand>
        <name>ATP</name>
        <dbReference type="ChEBI" id="CHEBI:30616"/>
    </ligand>
</feature>
<feature type="binding site" evidence="1">
    <location>
        <position position="16"/>
    </location>
    <ligand>
        <name>ADP</name>
        <dbReference type="ChEBI" id="CHEBI:456216"/>
    </ligand>
</feature>
<feature type="binding site" evidence="1">
    <location>
        <position position="82"/>
    </location>
    <ligand>
        <name>glycerol</name>
        <dbReference type="ChEBI" id="CHEBI:17754"/>
    </ligand>
</feature>
<feature type="binding site" evidence="1">
    <location>
        <position position="82"/>
    </location>
    <ligand>
        <name>sn-glycerol 3-phosphate</name>
        <dbReference type="ChEBI" id="CHEBI:57597"/>
    </ligand>
</feature>
<feature type="binding site" evidence="1">
    <location>
        <position position="134"/>
    </location>
    <ligand>
        <name>glycerol</name>
        <dbReference type="ChEBI" id="CHEBI:17754"/>
    </ligand>
</feature>
<feature type="binding site" evidence="1">
    <location>
        <position position="134"/>
    </location>
    <ligand>
        <name>sn-glycerol 3-phosphate</name>
        <dbReference type="ChEBI" id="CHEBI:57597"/>
    </ligand>
</feature>
<feature type="binding site" evidence="1">
    <location>
        <position position="243"/>
    </location>
    <ligand>
        <name>glycerol</name>
        <dbReference type="ChEBI" id="CHEBI:17754"/>
    </ligand>
</feature>
<feature type="binding site" evidence="1">
    <location>
        <position position="243"/>
    </location>
    <ligand>
        <name>sn-glycerol 3-phosphate</name>
        <dbReference type="ChEBI" id="CHEBI:57597"/>
    </ligand>
</feature>
<feature type="binding site" evidence="1">
    <location>
        <position position="244"/>
    </location>
    <ligand>
        <name>glycerol</name>
        <dbReference type="ChEBI" id="CHEBI:17754"/>
    </ligand>
</feature>
<feature type="binding site" evidence="1">
    <location>
        <position position="265"/>
    </location>
    <ligand>
        <name>ADP</name>
        <dbReference type="ChEBI" id="CHEBI:456216"/>
    </ligand>
</feature>
<feature type="binding site" evidence="1">
    <location>
        <position position="265"/>
    </location>
    <ligand>
        <name>ATP</name>
        <dbReference type="ChEBI" id="CHEBI:30616"/>
    </ligand>
</feature>
<feature type="binding site" evidence="1">
    <location>
        <position position="308"/>
    </location>
    <ligand>
        <name>ADP</name>
        <dbReference type="ChEBI" id="CHEBI:456216"/>
    </ligand>
</feature>
<feature type="binding site" evidence="1">
    <location>
        <position position="308"/>
    </location>
    <ligand>
        <name>ATP</name>
        <dbReference type="ChEBI" id="CHEBI:30616"/>
    </ligand>
</feature>
<feature type="binding site" evidence="1">
    <location>
        <position position="312"/>
    </location>
    <ligand>
        <name>ATP</name>
        <dbReference type="ChEBI" id="CHEBI:30616"/>
    </ligand>
</feature>
<feature type="binding site" evidence="1">
    <location>
        <position position="411"/>
    </location>
    <ligand>
        <name>ADP</name>
        <dbReference type="ChEBI" id="CHEBI:456216"/>
    </ligand>
</feature>
<feature type="binding site" evidence="1">
    <location>
        <position position="411"/>
    </location>
    <ligand>
        <name>ATP</name>
        <dbReference type="ChEBI" id="CHEBI:30616"/>
    </ligand>
</feature>